<feature type="chain" id="PRO_0000053881" description="Pleckstrin homology domain-containing family A member 4">
    <location>
        <begin position="1"/>
        <end position="588"/>
    </location>
</feature>
<feature type="domain" description="PH" evidence="3">
    <location>
        <begin position="54"/>
        <end position="153"/>
    </location>
</feature>
<feature type="region of interest" description="Disordered" evidence="4">
    <location>
        <begin position="155"/>
        <end position="349"/>
    </location>
</feature>
<feature type="region of interest" description="Disordered" evidence="4">
    <location>
        <begin position="495"/>
        <end position="588"/>
    </location>
</feature>
<feature type="compositionally biased region" description="Basic and acidic residues" evidence="4">
    <location>
        <begin position="183"/>
        <end position="193"/>
    </location>
</feature>
<feature type="compositionally biased region" description="Polar residues" evidence="4">
    <location>
        <begin position="211"/>
        <end position="222"/>
    </location>
</feature>
<feature type="compositionally biased region" description="Low complexity" evidence="4">
    <location>
        <begin position="246"/>
        <end position="260"/>
    </location>
</feature>
<feature type="compositionally biased region" description="Low complexity" evidence="4">
    <location>
        <begin position="321"/>
        <end position="334"/>
    </location>
</feature>
<feature type="modified residue" description="Phosphoserine" evidence="2">
    <location>
        <position position="164"/>
    </location>
</feature>
<feature type="modified residue" description="Phosphoserine" evidence="2">
    <location>
        <position position="562"/>
    </location>
</feature>
<feature type="splice variant" id="VSP_009773" description="In isoform 2." evidence="5">
    <original>MEQGRPRSSLSLASSASTVSSLSSLSTKKPTRAVHKVHAFGKRNNALRRDPNLPVHIRGWLHKQDSSGLRLWKRRWFVLSGHCLFYYKDSREESVLGSVLLPSYSVRPDGPGAPRGRRFTFT</original>
    <variation>MHFDETPTCRCTSVAGCTNRTAQASGCGSAVGSSFQAIASSTIR</variation>
    <location>
        <begin position="1"/>
        <end position="122"/>
    </location>
</feature>
<feature type="splice variant" id="VSP_009774" description="In isoform 2." evidence="5">
    <original>SLSESLELSSPQSPEVDWSRPSGGDRALSSPQSGVGSPRVSRASSPECRQPSSPLLRTKVDHL</original>
    <variation>TLEWNLNRQTWWQVPLSAEISHQPLI</variation>
    <location>
        <begin position="526"/>
        <end position="588"/>
    </location>
</feature>
<feature type="sequence conflict" description="In Ref. 1; AAH24961." evidence="6" ref="1">
    <original>H</original>
    <variation>Q</variation>
    <location>
        <position position="486"/>
    </location>
</feature>
<name>PKHA4_MOUSE</name>
<proteinExistence type="evidence at transcript level"/>
<sequence>MEQGRPRSSLSLASSASTVSSLSSLSTKKPTRAVHKVHAFGKRNNALRRDPNLPVHIRGWLHKQDSSGLRLWKRRWFVLSGHCLFYYKDSREESVLGSVLLPSYSVRPDGPGAPRGRRFTFTAEHPGMRTYVLAADTLEDLRGWLRALGRASRAEGEDCGLPRSPARPRPGEGPGGPGGPPEVNRREEGRISESPEVARLSRGLGRHETHTPNSTVDLQTDTWSRRTRSPELFSPLSRPPSPLSLPRPRSAPARRPPLSAGDISFPARPHTPLSRIDVRPPLDWGPQRQTLSRPPIPRRGPSSEAGGERPPRSPQPRTPEQRTQSTQATSGSSTYLQLPPRPPGTQASMILLPGPPVDSALHQSLETDTLLTKLCGQDRLLRQLQEDLDKRQEEKEQLEAALELTRQQLGQATREAAASGKAWGRQRLLQDRLVNVRAALCHLAQERERVWDTYSGLEQDLGTLRETLEYLLHLGSPQDRACAQQHLWMVEDTLAGLGGPQKQPPHTDPKSPSPAPQGEESSERESLSESLELSSPQSPEVDWSRPSGGDRALSSPQSGVGSPRVSRASSPECRQPSSPLLRTKVDHL</sequence>
<keyword id="KW-0025">Alternative splicing</keyword>
<keyword id="KW-0963">Cytoplasm</keyword>
<keyword id="KW-0446">Lipid-binding</keyword>
<keyword id="KW-0472">Membrane</keyword>
<keyword id="KW-0597">Phosphoprotein</keyword>
<keyword id="KW-1185">Reference proteome</keyword>
<comment type="function">
    <text evidence="1">Binds specifically to phosphatidylinositol 3-phosphate (PtdIns3P), but not to other phosphoinositides.</text>
</comment>
<comment type="subcellular location">
    <subcellularLocation>
        <location evidence="6">Cytoplasm</location>
    </subcellularLocation>
    <subcellularLocation>
        <location evidence="6">Membrane</location>
        <topology evidence="6">Peripheral membrane protein</topology>
    </subcellularLocation>
</comment>
<comment type="alternative products">
    <event type="alternative splicing"/>
    <isoform>
        <id>Q8VC98-1</id>
        <name>1</name>
        <sequence type="displayed"/>
    </isoform>
    <isoform>
        <id>Q8VC98-2</id>
        <name>2</name>
        <sequence type="described" ref="VSP_009773 VSP_009774"/>
    </isoform>
</comment>
<dbReference type="EMBL" id="BC021387">
    <property type="protein sequence ID" value="AAH21387.1"/>
    <property type="molecule type" value="mRNA"/>
</dbReference>
<dbReference type="EMBL" id="BC024961">
    <property type="protein sequence ID" value="AAH24961.1"/>
    <property type="molecule type" value="mRNA"/>
</dbReference>
<dbReference type="SMR" id="Q8VC98"/>
<dbReference type="FunCoup" id="Q8VC98">
    <property type="interactions" value="72"/>
</dbReference>
<dbReference type="STRING" id="10090.ENSMUSP00000051468"/>
<dbReference type="iPTMnet" id="Q8VC98"/>
<dbReference type="PhosphoSitePlus" id="Q8VC98"/>
<dbReference type="jPOST" id="Q8VC98"/>
<dbReference type="PaxDb" id="10090-ENSMUSP00000051468"/>
<dbReference type="ProteomicsDB" id="289900">
    <molecule id="Q8VC98-1"/>
</dbReference>
<dbReference type="ProteomicsDB" id="289901">
    <molecule id="Q8VC98-2"/>
</dbReference>
<dbReference type="AGR" id="MGI:1916467"/>
<dbReference type="MGI" id="MGI:1916467">
    <property type="gene designation" value="Plekha4"/>
</dbReference>
<dbReference type="eggNOG" id="ENOG502RI1J">
    <property type="taxonomic scope" value="Eukaryota"/>
</dbReference>
<dbReference type="InParanoid" id="Q8VC98"/>
<dbReference type="Reactome" id="R-MMU-1660499">
    <property type="pathway name" value="Synthesis of PIPs at the plasma membrane"/>
</dbReference>
<dbReference type="ChiTaRS" id="Plekha4">
    <property type="organism name" value="mouse"/>
</dbReference>
<dbReference type="PRO" id="PR:Q8VC98"/>
<dbReference type="Proteomes" id="UP000000589">
    <property type="component" value="Unplaced"/>
</dbReference>
<dbReference type="RNAct" id="Q8VC98">
    <property type="molecule type" value="protein"/>
</dbReference>
<dbReference type="GO" id="GO:0005737">
    <property type="term" value="C:cytoplasm"/>
    <property type="evidence" value="ECO:0007669"/>
    <property type="project" value="UniProtKB-SubCell"/>
</dbReference>
<dbReference type="GO" id="GO:0016020">
    <property type="term" value="C:membrane"/>
    <property type="evidence" value="ECO:0007669"/>
    <property type="project" value="UniProtKB-SubCell"/>
</dbReference>
<dbReference type="GO" id="GO:0008289">
    <property type="term" value="F:lipid binding"/>
    <property type="evidence" value="ECO:0007669"/>
    <property type="project" value="UniProtKB-KW"/>
</dbReference>
<dbReference type="CDD" id="cd13248">
    <property type="entry name" value="PH_PEPP1_2_3"/>
    <property type="match status" value="1"/>
</dbReference>
<dbReference type="FunFam" id="2.30.29.30:FF:000103">
    <property type="entry name" value="Pleckstrin homology domain-containing family A member 4"/>
    <property type="match status" value="1"/>
</dbReference>
<dbReference type="Gene3D" id="2.30.29.30">
    <property type="entry name" value="Pleckstrin-homology domain (PH domain)/Phosphotyrosine-binding domain (PTB)"/>
    <property type="match status" value="1"/>
</dbReference>
<dbReference type="InterPro" id="IPR011993">
    <property type="entry name" value="PH-like_dom_sf"/>
</dbReference>
<dbReference type="InterPro" id="IPR001849">
    <property type="entry name" value="PH_domain"/>
</dbReference>
<dbReference type="InterPro" id="IPR040392">
    <property type="entry name" value="PKHA4-7_PH"/>
</dbReference>
<dbReference type="PANTHER" id="PTHR12752">
    <property type="entry name" value="PHOSPHOINOSITOL 3-PHOSPHATE-BINDING PROTEIN"/>
    <property type="match status" value="1"/>
</dbReference>
<dbReference type="PANTHER" id="PTHR12752:SF7">
    <property type="entry name" value="PLECKSTRIN HOMOLOGY DOMAIN-CONTAINING FAMILY A MEMBER 4"/>
    <property type="match status" value="1"/>
</dbReference>
<dbReference type="Pfam" id="PF00169">
    <property type="entry name" value="PH"/>
    <property type="match status" value="1"/>
</dbReference>
<dbReference type="SMART" id="SM00233">
    <property type="entry name" value="PH"/>
    <property type="match status" value="1"/>
</dbReference>
<dbReference type="SUPFAM" id="SSF50729">
    <property type="entry name" value="PH domain-like"/>
    <property type="match status" value="1"/>
</dbReference>
<dbReference type="PROSITE" id="PS50003">
    <property type="entry name" value="PH_DOMAIN"/>
    <property type="match status" value="1"/>
</dbReference>
<protein>
    <recommendedName>
        <fullName>Pleckstrin homology domain-containing family A member 4</fullName>
        <shortName>PH domain-containing family A member 4</shortName>
    </recommendedName>
    <alternativeName>
        <fullName>Phosphoinositol 3-phosphate-binding protein 1</fullName>
        <shortName>PEPP-1</shortName>
    </alternativeName>
</protein>
<organism>
    <name type="scientific">Mus musculus</name>
    <name type="common">Mouse</name>
    <dbReference type="NCBI Taxonomy" id="10090"/>
    <lineage>
        <taxon>Eukaryota</taxon>
        <taxon>Metazoa</taxon>
        <taxon>Chordata</taxon>
        <taxon>Craniata</taxon>
        <taxon>Vertebrata</taxon>
        <taxon>Euteleostomi</taxon>
        <taxon>Mammalia</taxon>
        <taxon>Eutheria</taxon>
        <taxon>Euarchontoglires</taxon>
        <taxon>Glires</taxon>
        <taxon>Rodentia</taxon>
        <taxon>Myomorpha</taxon>
        <taxon>Muroidea</taxon>
        <taxon>Muridae</taxon>
        <taxon>Murinae</taxon>
        <taxon>Mus</taxon>
        <taxon>Mus</taxon>
    </lineage>
</organism>
<accession>Q8VC98</accession>
<accession>Q8R3N3</accession>
<reference key="1">
    <citation type="journal article" date="2004" name="Genome Res.">
        <title>The status, quality, and expansion of the NIH full-length cDNA project: the Mammalian Gene Collection (MGC).</title>
        <authorList>
            <consortium name="The MGC Project Team"/>
        </authorList>
    </citation>
    <scope>NUCLEOTIDE SEQUENCE [LARGE SCALE MRNA] (ISOFORMS 1 AND 2)</scope>
    <source>
        <tissue>Liver</tissue>
        <tissue>Mammary tumor</tissue>
    </source>
</reference>
<evidence type="ECO:0000250" key="1"/>
<evidence type="ECO:0000250" key="2">
    <source>
        <dbReference type="UniProtKB" id="Q9H4M7"/>
    </source>
</evidence>
<evidence type="ECO:0000255" key="3">
    <source>
        <dbReference type="PROSITE-ProRule" id="PRU00145"/>
    </source>
</evidence>
<evidence type="ECO:0000256" key="4">
    <source>
        <dbReference type="SAM" id="MobiDB-lite"/>
    </source>
</evidence>
<evidence type="ECO:0000303" key="5">
    <source>
    </source>
</evidence>
<evidence type="ECO:0000305" key="6"/>
<gene>
    <name type="primary">Plekha4</name>
    <name type="synonym">Pepp1</name>
</gene>